<reference key="1">
    <citation type="journal article" date="1990" name="J. Biol. Chem.">
        <title>Unique precursor structure of an extracellular protease, aqualysin I, with NH2- and COOH-terminal pro-sequences and its processing in Escherichia coli.</title>
        <authorList>
            <person name="Terada I."/>
            <person name="Kwon S.-T."/>
            <person name="Miyata Y."/>
            <person name="Matsuzawa H."/>
            <person name="Ohta T."/>
        </authorList>
    </citation>
    <scope>NUCLEOTIDE SEQUENCE [GENOMIC DNA]</scope>
    <scope>PROTEIN SEQUENCE OF 15-23</scope>
    <source>
        <strain>ATCC 25104 / DSM 625 / JCM 10724 / NBRC 103206 / NCIMB 11243 / YT-1</strain>
    </source>
</reference>
<reference key="2">
    <citation type="journal article" date="1988" name="Eur. J. Biochem.">
        <title>Nucleotide sequence of the gene for aqualysin I (a thermophilic alkaline serine protease) of Thermus aquaticus YT-1 and characteristics of the deduced primary structure of the enzyme.</title>
        <authorList>
            <person name="Kwon S.-T."/>
            <person name="Terada I."/>
            <person name="Matsuzawa H."/>
            <person name="Ohta T."/>
        </authorList>
    </citation>
    <scope>NUCLEOTIDE SEQUENCE [GENOMIC DNA] OF 75-442</scope>
    <scope>PARTIAL PROTEIN SEQUENCE</scope>
    <source>
        <strain>ATCC 25104 / DSM 625 / JCM 10724 / NBRC 103206 / NCIMB 11243 / YT-1</strain>
    </source>
</reference>
<reference key="3">
    <citation type="journal article" date="1988" name="Eur. J. Biochem.">
        <title>Purification and characterization of aqualysin I (a thermophilic alkaline serine protease) produced by Thermus aquaticus YT-1.</title>
        <authorList>
            <person name="Matsuzawa H."/>
            <person name="Tokugawa K."/>
            <person name="Hamaoki M."/>
            <person name="Mizoguchi M."/>
            <person name="Taguchi H."/>
            <person name="Terada I."/>
            <person name="Kwon S.-T."/>
            <person name="Ohta T."/>
        </authorList>
    </citation>
    <scope>PROTEIN SEQUENCE OF 128-170</scope>
</reference>
<reference key="4">
    <citation type="journal article" date="2008" name="J. Biochem.">
        <title>Role of disulphide bonds in a thermophilic serine protease aqualysin I from Thermus aquaticus YT-1.</title>
        <authorList>
            <person name="Sakaguchi M."/>
            <person name="Takezawa M."/>
            <person name="Nakazawa R."/>
            <person name="Nozawa K."/>
            <person name="Kusakawa T."/>
            <person name="Nagasawa T."/>
            <person name="Sugahara Y."/>
            <person name="Kawakita M."/>
        </authorList>
    </citation>
    <scope>DISULFIDE BONDS</scope>
</reference>
<proteinExistence type="evidence at protein level"/>
<dbReference type="EC" id="3.4.21.111"/>
<dbReference type="EMBL" id="D90108">
    <property type="protein sequence ID" value="BAA14135.1"/>
    <property type="molecule type" value="Genomic_DNA"/>
</dbReference>
<dbReference type="EMBL" id="X07734">
    <property type="protein sequence ID" value="CAA30559.1"/>
    <property type="molecule type" value="Genomic_DNA"/>
</dbReference>
<dbReference type="PIR" id="A35742">
    <property type="entry name" value="A35742"/>
</dbReference>
<dbReference type="PDB" id="4DZT">
    <property type="method" value="X-ray"/>
    <property type="resolution" value="1.95 A"/>
    <property type="chains" value="A=128-403"/>
</dbReference>
<dbReference type="PDBsum" id="4DZT"/>
<dbReference type="SMR" id="P08594"/>
<dbReference type="MEROPS" id="S08.051"/>
<dbReference type="KEGG" id="ag:BAA14135"/>
<dbReference type="BioCyc" id="MetaCyc:MONOMER-12998"/>
<dbReference type="BRENDA" id="3.4.21.111">
    <property type="organism ID" value="6334"/>
</dbReference>
<dbReference type="EvolutionaryTrace" id="P08594"/>
<dbReference type="GO" id="GO:0005615">
    <property type="term" value="C:extracellular space"/>
    <property type="evidence" value="ECO:0007669"/>
    <property type="project" value="TreeGrafter"/>
</dbReference>
<dbReference type="GO" id="GO:0004252">
    <property type="term" value="F:serine-type endopeptidase activity"/>
    <property type="evidence" value="ECO:0007669"/>
    <property type="project" value="InterPro"/>
</dbReference>
<dbReference type="GO" id="GO:0006508">
    <property type="term" value="P:proteolysis"/>
    <property type="evidence" value="ECO:0007669"/>
    <property type="project" value="UniProtKB-KW"/>
</dbReference>
<dbReference type="CDD" id="cd04077">
    <property type="entry name" value="Peptidases_S8_PCSK9_ProteinaseK_like"/>
    <property type="match status" value="1"/>
</dbReference>
<dbReference type="FunFam" id="3.40.50.200:FF:000014">
    <property type="entry name" value="Proteinase K"/>
    <property type="match status" value="1"/>
</dbReference>
<dbReference type="Gene3D" id="2.60.120.380">
    <property type="match status" value="1"/>
</dbReference>
<dbReference type="Gene3D" id="3.30.70.80">
    <property type="entry name" value="Peptidase S8 propeptide/proteinase inhibitor I9"/>
    <property type="match status" value="1"/>
</dbReference>
<dbReference type="Gene3D" id="3.40.50.200">
    <property type="entry name" value="Peptidase S8/S53 domain"/>
    <property type="match status" value="1"/>
</dbReference>
<dbReference type="InterPro" id="IPR034193">
    <property type="entry name" value="PCSK9_ProteinaseK-like"/>
</dbReference>
<dbReference type="InterPro" id="IPR000209">
    <property type="entry name" value="Peptidase_S8/S53_dom"/>
</dbReference>
<dbReference type="InterPro" id="IPR036852">
    <property type="entry name" value="Peptidase_S8/S53_dom_sf"/>
</dbReference>
<dbReference type="InterPro" id="IPR023827">
    <property type="entry name" value="Peptidase_S8_Asp-AS"/>
</dbReference>
<dbReference type="InterPro" id="IPR022398">
    <property type="entry name" value="Peptidase_S8_His-AS"/>
</dbReference>
<dbReference type="InterPro" id="IPR023828">
    <property type="entry name" value="Peptidase_S8_Ser-AS"/>
</dbReference>
<dbReference type="InterPro" id="IPR050131">
    <property type="entry name" value="Peptidase_S8_subtilisin-like"/>
</dbReference>
<dbReference type="InterPro" id="IPR015500">
    <property type="entry name" value="Peptidase_S8_subtilisin-rel"/>
</dbReference>
<dbReference type="InterPro" id="IPR010259">
    <property type="entry name" value="S8pro/Inhibitor_I9"/>
</dbReference>
<dbReference type="InterPro" id="IPR037045">
    <property type="entry name" value="S8pro/Inhibitor_I9_sf"/>
</dbReference>
<dbReference type="PANTHER" id="PTHR43806:SF11">
    <property type="entry name" value="CEREVISIN-RELATED"/>
    <property type="match status" value="1"/>
</dbReference>
<dbReference type="PANTHER" id="PTHR43806">
    <property type="entry name" value="PEPTIDASE S8"/>
    <property type="match status" value="1"/>
</dbReference>
<dbReference type="Pfam" id="PF05922">
    <property type="entry name" value="Inhibitor_I9"/>
    <property type="match status" value="1"/>
</dbReference>
<dbReference type="Pfam" id="PF00082">
    <property type="entry name" value="Peptidase_S8"/>
    <property type="match status" value="1"/>
</dbReference>
<dbReference type="PRINTS" id="PR00723">
    <property type="entry name" value="SUBTILISIN"/>
</dbReference>
<dbReference type="SUPFAM" id="SSF54897">
    <property type="entry name" value="Protease propeptides/inhibitors"/>
    <property type="match status" value="1"/>
</dbReference>
<dbReference type="SUPFAM" id="SSF52743">
    <property type="entry name" value="Subtilisin-like"/>
    <property type="match status" value="1"/>
</dbReference>
<dbReference type="PROSITE" id="PS51892">
    <property type="entry name" value="SUBTILASE"/>
    <property type="match status" value="1"/>
</dbReference>
<dbReference type="PROSITE" id="PS00136">
    <property type="entry name" value="SUBTILASE_ASP"/>
    <property type="match status" value="1"/>
</dbReference>
<dbReference type="PROSITE" id="PS00137">
    <property type="entry name" value="SUBTILASE_HIS"/>
    <property type="match status" value="1"/>
</dbReference>
<dbReference type="PROSITE" id="PS00138">
    <property type="entry name" value="SUBTILASE_SER"/>
    <property type="match status" value="1"/>
</dbReference>
<feature type="signal peptide" evidence="4">
    <location>
        <begin position="1"/>
        <end position="14"/>
    </location>
</feature>
<feature type="propeptide" id="PRO_0000026992" evidence="5">
    <location>
        <begin position="15"/>
        <end position="127"/>
    </location>
</feature>
<feature type="chain" id="PRO_0000026993" description="Aqualysin-1">
    <location>
        <begin position="128"/>
        <end position="408"/>
    </location>
</feature>
<feature type="propeptide" id="PRO_0000026994">
    <location>
        <begin position="409"/>
        <end position="513"/>
    </location>
</feature>
<feature type="domain" description="Inhibitor I9" evidence="1">
    <location>
        <begin position="54"/>
        <end position="125"/>
    </location>
</feature>
<feature type="domain" description="Peptidase S8" evidence="2">
    <location>
        <begin position="134"/>
        <end position="409"/>
    </location>
</feature>
<feature type="active site" description="Charge relay system" evidence="2">
    <location>
        <position position="166"/>
    </location>
</feature>
<feature type="active site" description="Charge relay system" evidence="2">
    <location>
        <position position="197"/>
    </location>
</feature>
<feature type="active site" description="Charge relay system" evidence="2">
    <location>
        <position position="349"/>
    </location>
</feature>
<feature type="disulfide bond" evidence="3">
    <location>
        <begin position="194"/>
        <end position="226"/>
    </location>
</feature>
<feature type="disulfide bond" evidence="3">
    <location>
        <begin position="290"/>
        <end position="321"/>
    </location>
</feature>
<feature type="strand" evidence="7">
    <location>
        <begin position="129"/>
        <end position="132"/>
    </location>
</feature>
<feature type="helix" evidence="7">
    <location>
        <begin position="135"/>
        <end position="140"/>
    </location>
</feature>
<feature type="strand" evidence="7">
    <location>
        <begin position="142"/>
        <end position="146"/>
    </location>
</feature>
<feature type="strand" evidence="7">
    <location>
        <begin position="161"/>
        <end position="167"/>
    </location>
</feature>
<feature type="helix" evidence="7">
    <location>
        <begin position="174"/>
        <end position="176"/>
    </location>
</feature>
<feature type="strand" evidence="7">
    <location>
        <begin position="180"/>
        <end position="185"/>
    </location>
</feature>
<feature type="strand" evidence="7">
    <location>
        <begin position="194"/>
        <end position="196"/>
    </location>
</feature>
<feature type="helix" evidence="7">
    <location>
        <begin position="197"/>
        <end position="206"/>
    </location>
</feature>
<feature type="turn" evidence="7">
    <location>
        <begin position="208"/>
        <end position="210"/>
    </location>
</feature>
<feature type="strand" evidence="7">
    <location>
        <begin position="217"/>
        <end position="222"/>
    </location>
</feature>
<feature type="helix" evidence="7">
    <location>
        <begin position="232"/>
        <end position="245"/>
    </location>
</feature>
<feature type="strand" evidence="7">
    <location>
        <begin position="248"/>
        <end position="254"/>
    </location>
</feature>
<feature type="helix" evidence="7">
    <location>
        <begin position="262"/>
        <end position="273"/>
    </location>
</feature>
<feature type="strand" evidence="7">
    <location>
        <begin position="277"/>
        <end position="281"/>
    </location>
</feature>
<feature type="strand" evidence="7">
    <location>
        <begin position="284"/>
        <end position="288"/>
    </location>
</feature>
<feature type="helix" evidence="7">
    <location>
        <begin position="289"/>
        <end position="291"/>
    </location>
</feature>
<feature type="turn" evidence="7">
    <location>
        <begin position="294"/>
        <end position="296"/>
    </location>
</feature>
<feature type="strand" evidence="7">
    <location>
        <begin position="300"/>
        <end position="306"/>
    </location>
</feature>
<feature type="strand" evidence="7">
    <location>
        <begin position="310"/>
        <end position="312"/>
    </location>
</feature>
<feature type="strand" evidence="7">
    <location>
        <begin position="324"/>
        <end position="327"/>
    </location>
</feature>
<feature type="strand" evidence="7">
    <location>
        <begin position="329"/>
        <end position="334"/>
    </location>
</feature>
<feature type="strand" evidence="7">
    <location>
        <begin position="338"/>
        <end position="340"/>
    </location>
</feature>
<feature type="strand" evidence="7">
    <location>
        <begin position="342"/>
        <end position="345"/>
    </location>
</feature>
<feature type="helix" evidence="7">
    <location>
        <begin position="348"/>
        <end position="365"/>
    </location>
</feature>
<feature type="helix" evidence="7">
    <location>
        <begin position="371"/>
        <end position="381"/>
    </location>
</feature>
<feature type="strand" evidence="7">
    <location>
        <begin position="382"/>
        <end position="385"/>
    </location>
</feature>
<organism>
    <name type="scientific">Thermus aquaticus</name>
    <dbReference type="NCBI Taxonomy" id="271"/>
    <lineage>
        <taxon>Bacteria</taxon>
        <taxon>Thermotogati</taxon>
        <taxon>Deinococcota</taxon>
        <taxon>Deinococci</taxon>
        <taxon>Thermales</taxon>
        <taxon>Thermaceae</taxon>
        <taxon>Thermus</taxon>
    </lineage>
</organism>
<accession>P08594</accession>
<gene>
    <name type="primary">pstI</name>
</gene>
<keyword id="KW-0002">3D-structure</keyword>
<keyword id="KW-0068">Autocatalytic cleavage</keyword>
<keyword id="KW-0903">Direct protein sequencing</keyword>
<keyword id="KW-1015">Disulfide bond</keyword>
<keyword id="KW-0378">Hydrolase</keyword>
<keyword id="KW-0645">Protease</keyword>
<keyword id="KW-0964">Secreted</keyword>
<keyword id="KW-0720">Serine protease</keyword>
<keyword id="KW-0732">Signal</keyword>
<keyword id="KW-0865">Zymogen</keyword>
<protein>
    <recommendedName>
        <fullName>Aqualysin-1</fullName>
        <ecNumber>3.4.21.111</ecNumber>
    </recommendedName>
    <alternativeName>
        <fullName>Aqualysin-I</fullName>
    </alternativeName>
</protein>
<name>AQL1_THEAQ</name>
<sequence length="513" mass="53913">MRKTYWLMALFAVLVLGGCQMASRSDPTPTLAEAFWPKEAPVYGLDDPEAIPGRYIVVFKKGKGQSLLQGGITTLQARLAPQGVVVTQAYTGALQGFAAEMAPQALEAFRQSPDVEFIEADKVVRAWATQSPAPWGLDRIDQRDLPLSNSYTYTATGRGVNVYVIDTGIRTTHREFGGRARVGYDALGGNGQDCNGHGTHVAGTIGGVTYGVAKAVNLYAVRVLDCNGSGSTSGVIAGVDWVTRNHRRPAVANMSLGGGVSTALDNAVKNSIAAGVVYAVAAGNDNANACNYSPARVAEALTVGATTSSDARASFSNYGSCVDLFAPGASIPSAWYTSDTATQTLNGTSMATPHVAGVAALYLEQNPSATPASVASAILNGATTGRLSGIGSGSPNRLLYSLLSSGSGSTAPCTSCSYYTGSLSGPGDYNFQPNGTYYYSPAGTHRAWLRGPAGTDFDLYLWRWDGSRWLTVGSSTGPTSEESLSYSGTAGYYLWRIYAYSGSGMYEFWLQRP</sequence>
<comment type="function">
    <text>Aqualysin I is a thermophilic alkaline serine protease.</text>
</comment>
<comment type="catalytic activity">
    <reaction>
        <text>Exhibits low specificity toward esters of amino acids with small hydrophobic or aromatic residues at the P1 position.</text>
        <dbReference type="EC" id="3.4.21.111"/>
    </reaction>
</comment>
<comment type="biophysicochemical properties">
    <temperatureDependence>
        <text>Optimum temperature is 80 degrees Celsius for caseinolytic activity.</text>
    </temperatureDependence>
</comment>
<comment type="subcellular location">
    <subcellularLocation>
        <location>Secreted</location>
    </subcellularLocation>
</comment>
<comment type="developmental stage">
    <text>Secreted from the early stationary phase until the time the cells cease to grow.</text>
</comment>
<comment type="PTM">
    <text>The N- and C-terminal Pro-sequences are successively removed through the proteolytic activity of PstI itself. The C-terminal Pro-sequence is required for translocation of the proteases across the outer membrane.</text>
</comment>
<comment type="similarity">
    <text evidence="6">Belongs to the peptidase S8 family.</text>
</comment>
<evidence type="ECO:0000255" key="1"/>
<evidence type="ECO:0000255" key="2">
    <source>
        <dbReference type="PROSITE-ProRule" id="PRU01240"/>
    </source>
</evidence>
<evidence type="ECO:0000269" key="3">
    <source>
    </source>
</evidence>
<evidence type="ECO:0000269" key="4">
    <source>
    </source>
</evidence>
<evidence type="ECO:0000269" key="5">
    <source>
    </source>
</evidence>
<evidence type="ECO:0000305" key="6"/>
<evidence type="ECO:0007829" key="7">
    <source>
        <dbReference type="PDB" id="4DZT"/>
    </source>
</evidence>